<evidence type="ECO:0000255" key="1">
    <source>
        <dbReference type="HAMAP-Rule" id="MF_01454"/>
    </source>
</evidence>
<evidence type="ECO:0000255" key="2">
    <source>
        <dbReference type="PROSITE-ProRule" id="PRU01231"/>
    </source>
</evidence>
<proteinExistence type="inferred from homology"/>
<keyword id="KW-0963">Cytoplasm</keyword>
<keyword id="KW-0342">GTP-binding</keyword>
<keyword id="KW-0378">Hydrolase</keyword>
<keyword id="KW-0460">Magnesium</keyword>
<keyword id="KW-0479">Metal-binding</keyword>
<keyword id="KW-0547">Nucleotide-binding</keyword>
<keyword id="KW-1185">Reference proteome</keyword>
<protein>
    <recommendedName>
        <fullName evidence="1">GTPase Obg</fullName>
        <ecNumber evidence="1">3.6.5.-</ecNumber>
    </recommendedName>
    <alternativeName>
        <fullName evidence="1">GTP-binding protein Obg</fullName>
    </alternativeName>
</protein>
<dbReference type="EC" id="3.6.5.-" evidence="1"/>
<dbReference type="EMBL" id="AE014299">
    <property type="protein sequence ID" value="AAN56635.1"/>
    <property type="molecule type" value="Genomic_DNA"/>
</dbReference>
<dbReference type="RefSeq" id="NP_719191.1">
    <property type="nucleotide sequence ID" value="NC_004347.2"/>
</dbReference>
<dbReference type="RefSeq" id="WP_011073450.1">
    <property type="nucleotide sequence ID" value="NC_004347.2"/>
</dbReference>
<dbReference type="SMR" id="Q8EB83"/>
<dbReference type="STRING" id="211586.SO_3649"/>
<dbReference type="PaxDb" id="211586-SO_3649"/>
<dbReference type="KEGG" id="son:SO_3649"/>
<dbReference type="PATRIC" id="fig|211586.12.peg.3537"/>
<dbReference type="eggNOG" id="COG0536">
    <property type="taxonomic scope" value="Bacteria"/>
</dbReference>
<dbReference type="HOGENOM" id="CLU_011747_2_0_6"/>
<dbReference type="OrthoDB" id="9807318at2"/>
<dbReference type="PhylomeDB" id="Q8EB83"/>
<dbReference type="BioCyc" id="SONE211586:G1GMP-3398-MONOMER"/>
<dbReference type="Proteomes" id="UP000008186">
    <property type="component" value="Chromosome"/>
</dbReference>
<dbReference type="GO" id="GO:0005737">
    <property type="term" value="C:cytoplasm"/>
    <property type="evidence" value="ECO:0007669"/>
    <property type="project" value="UniProtKB-SubCell"/>
</dbReference>
<dbReference type="GO" id="GO:0005525">
    <property type="term" value="F:GTP binding"/>
    <property type="evidence" value="ECO:0000318"/>
    <property type="project" value="GO_Central"/>
</dbReference>
<dbReference type="GO" id="GO:0003924">
    <property type="term" value="F:GTPase activity"/>
    <property type="evidence" value="ECO:0000318"/>
    <property type="project" value="GO_Central"/>
</dbReference>
<dbReference type="GO" id="GO:0000287">
    <property type="term" value="F:magnesium ion binding"/>
    <property type="evidence" value="ECO:0007669"/>
    <property type="project" value="InterPro"/>
</dbReference>
<dbReference type="GO" id="GO:0042254">
    <property type="term" value="P:ribosome biogenesis"/>
    <property type="evidence" value="ECO:0007669"/>
    <property type="project" value="UniProtKB-UniRule"/>
</dbReference>
<dbReference type="CDD" id="cd01898">
    <property type="entry name" value="Obg"/>
    <property type="match status" value="1"/>
</dbReference>
<dbReference type="FunFam" id="2.70.210.12:FF:000001">
    <property type="entry name" value="GTPase Obg"/>
    <property type="match status" value="1"/>
</dbReference>
<dbReference type="Gene3D" id="2.70.210.12">
    <property type="entry name" value="GTP1/OBG domain"/>
    <property type="match status" value="1"/>
</dbReference>
<dbReference type="Gene3D" id="3.40.50.300">
    <property type="entry name" value="P-loop containing nucleotide triphosphate hydrolases"/>
    <property type="match status" value="1"/>
</dbReference>
<dbReference type="HAMAP" id="MF_01454">
    <property type="entry name" value="GTPase_Obg"/>
    <property type="match status" value="1"/>
</dbReference>
<dbReference type="InterPro" id="IPR031167">
    <property type="entry name" value="G_OBG"/>
</dbReference>
<dbReference type="InterPro" id="IPR006073">
    <property type="entry name" value="GTP-bd"/>
</dbReference>
<dbReference type="InterPro" id="IPR014100">
    <property type="entry name" value="GTP-bd_Obg/CgtA"/>
</dbReference>
<dbReference type="InterPro" id="IPR006074">
    <property type="entry name" value="GTP1-OBG_CS"/>
</dbReference>
<dbReference type="InterPro" id="IPR006169">
    <property type="entry name" value="GTP1_OBG_dom"/>
</dbReference>
<dbReference type="InterPro" id="IPR036726">
    <property type="entry name" value="GTP1_OBG_dom_sf"/>
</dbReference>
<dbReference type="InterPro" id="IPR045086">
    <property type="entry name" value="OBG_GTPase"/>
</dbReference>
<dbReference type="InterPro" id="IPR027417">
    <property type="entry name" value="P-loop_NTPase"/>
</dbReference>
<dbReference type="NCBIfam" id="TIGR02729">
    <property type="entry name" value="Obg_CgtA"/>
    <property type="match status" value="1"/>
</dbReference>
<dbReference type="NCBIfam" id="NF008955">
    <property type="entry name" value="PRK12297.1"/>
    <property type="match status" value="1"/>
</dbReference>
<dbReference type="NCBIfam" id="NF008956">
    <property type="entry name" value="PRK12299.1"/>
    <property type="match status" value="1"/>
</dbReference>
<dbReference type="PANTHER" id="PTHR11702">
    <property type="entry name" value="DEVELOPMENTALLY REGULATED GTP-BINDING PROTEIN-RELATED"/>
    <property type="match status" value="1"/>
</dbReference>
<dbReference type="PANTHER" id="PTHR11702:SF31">
    <property type="entry name" value="MITOCHONDRIAL RIBOSOME-ASSOCIATED GTPASE 2"/>
    <property type="match status" value="1"/>
</dbReference>
<dbReference type="Pfam" id="PF01018">
    <property type="entry name" value="GTP1_OBG"/>
    <property type="match status" value="1"/>
</dbReference>
<dbReference type="Pfam" id="PF01926">
    <property type="entry name" value="MMR_HSR1"/>
    <property type="match status" value="1"/>
</dbReference>
<dbReference type="PIRSF" id="PIRSF002401">
    <property type="entry name" value="GTP_bd_Obg/CgtA"/>
    <property type="match status" value="1"/>
</dbReference>
<dbReference type="PRINTS" id="PR00326">
    <property type="entry name" value="GTP1OBG"/>
</dbReference>
<dbReference type="SUPFAM" id="SSF82051">
    <property type="entry name" value="Obg GTP-binding protein N-terminal domain"/>
    <property type="match status" value="1"/>
</dbReference>
<dbReference type="SUPFAM" id="SSF52540">
    <property type="entry name" value="P-loop containing nucleoside triphosphate hydrolases"/>
    <property type="match status" value="1"/>
</dbReference>
<dbReference type="PROSITE" id="PS51710">
    <property type="entry name" value="G_OBG"/>
    <property type="match status" value="1"/>
</dbReference>
<dbReference type="PROSITE" id="PS00905">
    <property type="entry name" value="GTP1_OBG"/>
    <property type="match status" value="1"/>
</dbReference>
<dbReference type="PROSITE" id="PS51883">
    <property type="entry name" value="OBG"/>
    <property type="match status" value="1"/>
</dbReference>
<feature type="chain" id="PRO_0000386244" description="GTPase Obg">
    <location>
        <begin position="1"/>
        <end position="388"/>
    </location>
</feature>
<feature type="domain" description="Obg" evidence="2">
    <location>
        <begin position="1"/>
        <end position="159"/>
    </location>
</feature>
<feature type="domain" description="OBG-type G" evidence="1">
    <location>
        <begin position="160"/>
        <end position="333"/>
    </location>
</feature>
<feature type="binding site" evidence="1">
    <location>
        <begin position="166"/>
        <end position="173"/>
    </location>
    <ligand>
        <name>GTP</name>
        <dbReference type="ChEBI" id="CHEBI:37565"/>
    </ligand>
</feature>
<feature type="binding site" evidence="1">
    <location>
        <position position="173"/>
    </location>
    <ligand>
        <name>Mg(2+)</name>
        <dbReference type="ChEBI" id="CHEBI:18420"/>
    </ligand>
</feature>
<feature type="binding site" evidence="1">
    <location>
        <begin position="191"/>
        <end position="195"/>
    </location>
    <ligand>
        <name>GTP</name>
        <dbReference type="ChEBI" id="CHEBI:37565"/>
    </ligand>
</feature>
<feature type="binding site" evidence="1">
    <location>
        <position position="193"/>
    </location>
    <ligand>
        <name>Mg(2+)</name>
        <dbReference type="ChEBI" id="CHEBI:18420"/>
    </ligand>
</feature>
<feature type="binding site" evidence="1">
    <location>
        <begin position="213"/>
        <end position="216"/>
    </location>
    <ligand>
        <name>GTP</name>
        <dbReference type="ChEBI" id="CHEBI:37565"/>
    </ligand>
</feature>
<feature type="binding site" evidence="1">
    <location>
        <begin position="283"/>
        <end position="286"/>
    </location>
    <ligand>
        <name>GTP</name>
        <dbReference type="ChEBI" id="CHEBI:37565"/>
    </ligand>
</feature>
<feature type="binding site" evidence="1">
    <location>
        <begin position="314"/>
        <end position="316"/>
    </location>
    <ligand>
        <name>GTP</name>
        <dbReference type="ChEBI" id="CHEBI:37565"/>
    </ligand>
</feature>
<sequence>MKFVDEAVIRVEAGDGGSGCVSFRREKYIPDGGPDGGDGGDGGSVYLEADENFNTLIEYRFERFHMAERGENGRGRDCTGHSGKDLILKVPVGTRAIDHDTEEVLGDLTTHGQKLLVAKGGFHGLGNTRFKSSTNRAPRQKTLGTPGEVRSLKLELLLLADVGLLGMPNAGKSTFIRAVSRATPKVADYPFTTLVPNLGVVNPRPGQSYVIADIPGLIEGAAEGAGLGIRFLKHLERCRILLHIIDIEPIDGTDPVDSARAIVGELEKYSPKLASKPRWLVFNKADLLLEDELKEKAERVVKELGWEGEVYTISAYGRDGTKELAAKLWDFIQSLPPEDKDANPEDEVEFKWDNYHQANIDAINEDYDDDFDDDFDDDDYDVEVIYQR</sequence>
<organism>
    <name type="scientific">Shewanella oneidensis (strain ATCC 700550 / JCM 31522 / CIP 106686 / LMG 19005 / NCIMB 14063 / MR-1)</name>
    <dbReference type="NCBI Taxonomy" id="211586"/>
    <lineage>
        <taxon>Bacteria</taxon>
        <taxon>Pseudomonadati</taxon>
        <taxon>Pseudomonadota</taxon>
        <taxon>Gammaproteobacteria</taxon>
        <taxon>Alteromonadales</taxon>
        <taxon>Shewanellaceae</taxon>
        <taxon>Shewanella</taxon>
    </lineage>
</organism>
<gene>
    <name evidence="1" type="primary">obg</name>
    <name type="ordered locus">SO_3649</name>
</gene>
<name>OBG_SHEON</name>
<comment type="function">
    <text evidence="1">An essential GTPase which binds GTP, GDP and possibly (p)ppGpp with moderate affinity, with high nucleotide exchange rates and a fairly low GTP hydrolysis rate. Plays a role in control of the cell cycle, stress response, ribosome biogenesis and in those bacteria that undergo differentiation, in morphogenesis control.</text>
</comment>
<comment type="cofactor">
    <cofactor evidence="1">
        <name>Mg(2+)</name>
        <dbReference type="ChEBI" id="CHEBI:18420"/>
    </cofactor>
</comment>
<comment type="subunit">
    <text evidence="1">Monomer.</text>
</comment>
<comment type="subcellular location">
    <subcellularLocation>
        <location evidence="1">Cytoplasm</location>
    </subcellularLocation>
</comment>
<comment type="similarity">
    <text evidence="1">Belongs to the TRAFAC class OBG-HflX-like GTPase superfamily. OBG GTPase family.</text>
</comment>
<accession>Q8EB83</accession>
<reference key="1">
    <citation type="journal article" date="2002" name="Nat. Biotechnol.">
        <title>Genome sequence of the dissimilatory metal ion-reducing bacterium Shewanella oneidensis.</title>
        <authorList>
            <person name="Heidelberg J.F."/>
            <person name="Paulsen I.T."/>
            <person name="Nelson K.E."/>
            <person name="Gaidos E.J."/>
            <person name="Nelson W.C."/>
            <person name="Read T.D."/>
            <person name="Eisen J.A."/>
            <person name="Seshadri R."/>
            <person name="Ward N.L."/>
            <person name="Methe B.A."/>
            <person name="Clayton R.A."/>
            <person name="Meyer T."/>
            <person name="Tsapin A."/>
            <person name="Scott J."/>
            <person name="Beanan M.J."/>
            <person name="Brinkac L.M."/>
            <person name="Daugherty S.C."/>
            <person name="DeBoy R.T."/>
            <person name="Dodson R.J."/>
            <person name="Durkin A.S."/>
            <person name="Haft D.H."/>
            <person name="Kolonay J.F."/>
            <person name="Madupu R."/>
            <person name="Peterson J.D."/>
            <person name="Umayam L.A."/>
            <person name="White O."/>
            <person name="Wolf A.M."/>
            <person name="Vamathevan J.J."/>
            <person name="Weidman J.F."/>
            <person name="Impraim M."/>
            <person name="Lee K."/>
            <person name="Berry K.J."/>
            <person name="Lee C."/>
            <person name="Mueller J."/>
            <person name="Khouri H.M."/>
            <person name="Gill J."/>
            <person name="Utterback T.R."/>
            <person name="McDonald L.A."/>
            <person name="Feldblyum T.V."/>
            <person name="Smith H.O."/>
            <person name="Venter J.C."/>
            <person name="Nealson K.H."/>
            <person name="Fraser C.M."/>
        </authorList>
    </citation>
    <scope>NUCLEOTIDE SEQUENCE [LARGE SCALE GENOMIC DNA]</scope>
    <source>
        <strain>ATCC 700550 / JCM 31522 / CIP 106686 / LMG 19005 / NCIMB 14063 / MR-1</strain>
    </source>
</reference>